<reference key="1">
    <citation type="journal article" date="1999" name="Nature">
        <title>Evidence for lateral gene transfer between Archaea and Bacteria from genome sequence of Thermotoga maritima.</title>
        <authorList>
            <person name="Nelson K.E."/>
            <person name="Clayton R.A."/>
            <person name="Gill S.R."/>
            <person name="Gwinn M.L."/>
            <person name="Dodson R.J."/>
            <person name="Haft D.H."/>
            <person name="Hickey E.K."/>
            <person name="Peterson J.D."/>
            <person name="Nelson W.C."/>
            <person name="Ketchum K.A."/>
            <person name="McDonald L.A."/>
            <person name="Utterback T.R."/>
            <person name="Malek J.A."/>
            <person name="Linher K.D."/>
            <person name="Garrett M.M."/>
            <person name="Stewart A.M."/>
            <person name="Cotton M.D."/>
            <person name="Pratt M.S."/>
            <person name="Phillips C.A."/>
            <person name="Richardson D.L."/>
            <person name="Heidelberg J.F."/>
            <person name="Sutton G.G."/>
            <person name="Fleischmann R.D."/>
            <person name="Eisen J.A."/>
            <person name="White O."/>
            <person name="Salzberg S.L."/>
            <person name="Smith H.O."/>
            <person name="Venter J.C."/>
            <person name="Fraser C.M."/>
        </authorList>
    </citation>
    <scope>NUCLEOTIDE SEQUENCE [LARGE SCALE GENOMIC DNA]</scope>
    <source>
        <strain>ATCC 43589 / DSM 3109 / JCM 10099 / NBRC 100826 / MSB8</strain>
    </source>
</reference>
<evidence type="ECO:0000255" key="1">
    <source>
        <dbReference type="HAMAP-Rule" id="MF_01152"/>
    </source>
</evidence>
<feature type="chain" id="PRO_0000070917" description="Chaperone protein DnaJ">
    <location>
        <begin position="1"/>
        <end position="369"/>
    </location>
</feature>
<feature type="domain" description="J" evidence="1">
    <location>
        <begin position="7"/>
        <end position="73"/>
    </location>
</feature>
<feature type="repeat" description="CXXCXGXG motif">
    <location>
        <begin position="156"/>
        <end position="163"/>
    </location>
</feature>
<feature type="repeat" description="CXXCXGXG motif">
    <location>
        <begin position="173"/>
        <end position="180"/>
    </location>
</feature>
<feature type="repeat" description="CXXCXGXG motif">
    <location>
        <begin position="199"/>
        <end position="206"/>
    </location>
</feature>
<feature type="repeat" description="CXXCXGXG motif">
    <location>
        <begin position="213"/>
        <end position="220"/>
    </location>
</feature>
<feature type="zinc finger region" description="CR-type" evidence="1">
    <location>
        <begin position="143"/>
        <end position="225"/>
    </location>
</feature>
<feature type="binding site" evidence="1">
    <location>
        <position position="156"/>
    </location>
    <ligand>
        <name>Zn(2+)</name>
        <dbReference type="ChEBI" id="CHEBI:29105"/>
        <label>1</label>
    </ligand>
</feature>
<feature type="binding site" evidence="1">
    <location>
        <position position="159"/>
    </location>
    <ligand>
        <name>Zn(2+)</name>
        <dbReference type="ChEBI" id="CHEBI:29105"/>
        <label>1</label>
    </ligand>
</feature>
<feature type="binding site" evidence="1">
    <location>
        <position position="173"/>
    </location>
    <ligand>
        <name>Zn(2+)</name>
        <dbReference type="ChEBI" id="CHEBI:29105"/>
        <label>2</label>
    </ligand>
</feature>
<feature type="binding site" evidence="1">
    <location>
        <position position="176"/>
    </location>
    <ligand>
        <name>Zn(2+)</name>
        <dbReference type="ChEBI" id="CHEBI:29105"/>
        <label>2</label>
    </ligand>
</feature>
<feature type="binding site" evidence="1">
    <location>
        <position position="199"/>
    </location>
    <ligand>
        <name>Zn(2+)</name>
        <dbReference type="ChEBI" id="CHEBI:29105"/>
        <label>2</label>
    </ligand>
</feature>
<feature type="binding site" evidence="1">
    <location>
        <position position="202"/>
    </location>
    <ligand>
        <name>Zn(2+)</name>
        <dbReference type="ChEBI" id="CHEBI:29105"/>
        <label>2</label>
    </ligand>
</feature>
<feature type="binding site" evidence="1">
    <location>
        <position position="213"/>
    </location>
    <ligand>
        <name>Zn(2+)</name>
        <dbReference type="ChEBI" id="CHEBI:29105"/>
        <label>1</label>
    </ligand>
</feature>
<feature type="binding site" evidence="1">
    <location>
        <position position="216"/>
    </location>
    <ligand>
        <name>Zn(2+)</name>
        <dbReference type="ChEBI" id="CHEBI:29105"/>
        <label>1</label>
    </ligand>
</feature>
<protein>
    <recommendedName>
        <fullName evidence="1">Chaperone protein DnaJ</fullName>
    </recommendedName>
</protein>
<proteinExistence type="inferred from homology"/>
<name>DNAJ_THEMA</name>
<keyword id="KW-0143">Chaperone</keyword>
<keyword id="KW-0963">Cytoplasm</keyword>
<keyword id="KW-0235">DNA replication</keyword>
<keyword id="KW-0479">Metal-binding</keyword>
<keyword id="KW-1185">Reference proteome</keyword>
<keyword id="KW-0677">Repeat</keyword>
<keyword id="KW-0346">Stress response</keyword>
<keyword id="KW-0862">Zinc</keyword>
<keyword id="KW-0863">Zinc-finger</keyword>
<dbReference type="EMBL" id="AE000512">
    <property type="protein sequence ID" value="AAD35931.1"/>
    <property type="molecule type" value="Genomic_DNA"/>
</dbReference>
<dbReference type="PIR" id="B72327">
    <property type="entry name" value="B72327"/>
</dbReference>
<dbReference type="RefSeq" id="NP_228658.1">
    <property type="nucleotide sequence ID" value="NC_000853.1"/>
</dbReference>
<dbReference type="RefSeq" id="WP_004080777.1">
    <property type="nucleotide sequence ID" value="NZ_CP011107.1"/>
</dbReference>
<dbReference type="SMR" id="Q9WZV3"/>
<dbReference type="FunCoup" id="Q9WZV3">
    <property type="interactions" value="401"/>
</dbReference>
<dbReference type="STRING" id="243274.TM_0849"/>
<dbReference type="PaxDb" id="243274-THEMA_00395"/>
<dbReference type="EnsemblBacteria" id="AAD35931">
    <property type="protein sequence ID" value="AAD35931"/>
    <property type="gene ID" value="TM_0849"/>
</dbReference>
<dbReference type="KEGG" id="tma:TM0849"/>
<dbReference type="KEGG" id="tmi:THEMA_00395"/>
<dbReference type="KEGG" id="tmm:Tmari_0851"/>
<dbReference type="KEGG" id="tmw:THMA_0870"/>
<dbReference type="eggNOG" id="COG0484">
    <property type="taxonomic scope" value="Bacteria"/>
</dbReference>
<dbReference type="InParanoid" id="Q9WZV3"/>
<dbReference type="OrthoDB" id="9779889at2"/>
<dbReference type="Proteomes" id="UP000008183">
    <property type="component" value="Chromosome"/>
</dbReference>
<dbReference type="GO" id="GO:0005737">
    <property type="term" value="C:cytoplasm"/>
    <property type="evidence" value="ECO:0000318"/>
    <property type="project" value="GO_Central"/>
</dbReference>
<dbReference type="GO" id="GO:0005524">
    <property type="term" value="F:ATP binding"/>
    <property type="evidence" value="ECO:0007669"/>
    <property type="project" value="InterPro"/>
</dbReference>
<dbReference type="GO" id="GO:0031072">
    <property type="term" value="F:heat shock protein binding"/>
    <property type="evidence" value="ECO:0007669"/>
    <property type="project" value="InterPro"/>
</dbReference>
<dbReference type="GO" id="GO:0051082">
    <property type="term" value="F:unfolded protein binding"/>
    <property type="evidence" value="ECO:0000318"/>
    <property type="project" value="GO_Central"/>
</dbReference>
<dbReference type="GO" id="GO:0008270">
    <property type="term" value="F:zinc ion binding"/>
    <property type="evidence" value="ECO:0007669"/>
    <property type="project" value="UniProtKB-UniRule"/>
</dbReference>
<dbReference type="GO" id="GO:0051085">
    <property type="term" value="P:chaperone cofactor-dependent protein refolding"/>
    <property type="evidence" value="ECO:0000318"/>
    <property type="project" value="GO_Central"/>
</dbReference>
<dbReference type="GO" id="GO:0006260">
    <property type="term" value="P:DNA replication"/>
    <property type="evidence" value="ECO:0007669"/>
    <property type="project" value="UniProtKB-KW"/>
</dbReference>
<dbReference type="GO" id="GO:0042026">
    <property type="term" value="P:protein refolding"/>
    <property type="evidence" value="ECO:0000318"/>
    <property type="project" value="GO_Central"/>
</dbReference>
<dbReference type="GO" id="GO:0009408">
    <property type="term" value="P:response to heat"/>
    <property type="evidence" value="ECO:0007669"/>
    <property type="project" value="InterPro"/>
</dbReference>
<dbReference type="CDD" id="cd06257">
    <property type="entry name" value="DnaJ"/>
    <property type="match status" value="1"/>
</dbReference>
<dbReference type="CDD" id="cd10747">
    <property type="entry name" value="DnaJ_C"/>
    <property type="match status" value="1"/>
</dbReference>
<dbReference type="CDD" id="cd10719">
    <property type="entry name" value="DnaJ_zf"/>
    <property type="match status" value="1"/>
</dbReference>
<dbReference type="FunFam" id="1.10.287.110:FF:000034">
    <property type="entry name" value="Chaperone protein DnaJ"/>
    <property type="match status" value="1"/>
</dbReference>
<dbReference type="FunFam" id="2.60.260.20:FF:000005">
    <property type="entry name" value="Chaperone protein dnaJ 1, mitochondrial"/>
    <property type="match status" value="1"/>
</dbReference>
<dbReference type="FunFam" id="2.10.230.10:FF:000002">
    <property type="entry name" value="Molecular chaperone DnaJ"/>
    <property type="match status" value="1"/>
</dbReference>
<dbReference type="Gene3D" id="1.10.287.110">
    <property type="entry name" value="DnaJ domain"/>
    <property type="match status" value="1"/>
</dbReference>
<dbReference type="Gene3D" id="2.10.230.10">
    <property type="entry name" value="Heat shock protein DnaJ, cysteine-rich domain"/>
    <property type="match status" value="1"/>
</dbReference>
<dbReference type="Gene3D" id="2.60.260.20">
    <property type="entry name" value="Urease metallochaperone UreE, N-terminal domain"/>
    <property type="match status" value="2"/>
</dbReference>
<dbReference type="HAMAP" id="MF_01152">
    <property type="entry name" value="DnaJ"/>
    <property type="match status" value="1"/>
</dbReference>
<dbReference type="InterPro" id="IPR012724">
    <property type="entry name" value="DnaJ"/>
</dbReference>
<dbReference type="InterPro" id="IPR002939">
    <property type="entry name" value="DnaJ_C"/>
</dbReference>
<dbReference type="InterPro" id="IPR001623">
    <property type="entry name" value="DnaJ_domain"/>
</dbReference>
<dbReference type="InterPro" id="IPR018253">
    <property type="entry name" value="DnaJ_domain_CS"/>
</dbReference>
<dbReference type="InterPro" id="IPR008971">
    <property type="entry name" value="HSP40/DnaJ_pept-bd"/>
</dbReference>
<dbReference type="InterPro" id="IPR001305">
    <property type="entry name" value="HSP_DnaJ_Cys-rich_dom"/>
</dbReference>
<dbReference type="InterPro" id="IPR036410">
    <property type="entry name" value="HSP_DnaJ_Cys-rich_dom_sf"/>
</dbReference>
<dbReference type="InterPro" id="IPR036869">
    <property type="entry name" value="J_dom_sf"/>
</dbReference>
<dbReference type="NCBIfam" id="TIGR02349">
    <property type="entry name" value="DnaJ_bact"/>
    <property type="match status" value="1"/>
</dbReference>
<dbReference type="NCBIfam" id="NF008035">
    <property type="entry name" value="PRK10767.1"/>
    <property type="match status" value="1"/>
</dbReference>
<dbReference type="NCBIfam" id="NF010875">
    <property type="entry name" value="PRK14282.1"/>
    <property type="match status" value="1"/>
</dbReference>
<dbReference type="PANTHER" id="PTHR43096">
    <property type="entry name" value="DNAJ HOMOLOG 1, MITOCHONDRIAL-RELATED"/>
    <property type="match status" value="1"/>
</dbReference>
<dbReference type="PANTHER" id="PTHR43096:SF52">
    <property type="entry name" value="DNAJ HOMOLOG 1, MITOCHONDRIAL-RELATED"/>
    <property type="match status" value="1"/>
</dbReference>
<dbReference type="Pfam" id="PF00226">
    <property type="entry name" value="DnaJ"/>
    <property type="match status" value="1"/>
</dbReference>
<dbReference type="Pfam" id="PF01556">
    <property type="entry name" value="DnaJ_C"/>
    <property type="match status" value="1"/>
</dbReference>
<dbReference type="Pfam" id="PF00684">
    <property type="entry name" value="DnaJ_CXXCXGXG"/>
    <property type="match status" value="1"/>
</dbReference>
<dbReference type="PRINTS" id="PR00625">
    <property type="entry name" value="JDOMAIN"/>
</dbReference>
<dbReference type="SMART" id="SM00271">
    <property type="entry name" value="DnaJ"/>
    <property type="match status" value="1"/>
</dbReference>
<dbReference type="SUPFAM" id="SSF46565">
    <property type="entry name" value="Chaperone J-domain"/>
    <property type="match status" value="1"/>
</dbReference>
<dbReference type="SUPFAM" id="SSF57938">
    <property type="entry name" value="DnaJ/Hsp40 cysteine-rich domain"/>
    <property type="match status" value="1"/>
</dbReference>
<dbReference type="SUPFAM" id="SSF49493">
    <property type="entry name" value="HSP40/DnaJ peptide-binding domain"/>
    <property type="match status" value="2"/>
</dbReference>
<dbReference type="PROSITE" id="PS00636">
    <property type="entry name" value="DNAJ_1"/>
    <property type="match status" value="1"/>
</dbReference>
<dbReference type="PROSITE" id="PS50076">
    <property type="entry name" value="DNAJ_2"/>
    <property type="match status" value="1"/>
</dbReference>
<dbReference type="PROSITE" id="PS51188">
    <property type="entry name" value="ZF_CR"/>
    <property type="match status" value="1"/>
</dbReference>
<accession>Q9WZV3</accession>
<sequence length="369" mass="42358">MKKEKKDYYEILGVPRDATQEEIKRAYKRLVKEWHPDRHPENRKEAEQRFKEIQEAYEVLSDPQKRAMYDRFGYVGEQPTYQETESGGFFDDIFRDFENIFNRDIFDVFFGERPHQEERREYARRGEDIRYEIEVTLSDLINGAEIPVEYERYETCPRCGGTGVEPNAGYMDCPSCGGTGRIREERRSFFGYFVSERTCERCGGTGKIPREYCHECGGSGRVLRKVRRTVKIPPNVEDGTHLRITGGGNAGYYGGPYGDLIIIVRVKPDPRFKKSGSDLVYDVTIDYLQAILGTTVEVPLPEGGTTMLKIPPGTQPETVFRLKGKGLPNRYGRRGDLIVNVHVEIPKSLSREERKVLEELAKKRGVTIG</sequence>
<gene>
    <name evidence="1" type="primary">dnaJ</name>
    <name type="ordered locus">TM_0849</name>
</gene>
<comment type="function">
    <text evidence="1">Participates actively in the response to hyperosmotic and heat shock by preventing the aggregation of stress-denatured proteins and by disaggregating proteins, also in an autonomous, DnaK-independent fashion. Unfolded proteins bind initially to DnaJ; upon interaction with the DnaJ-bound protein, DnaK hydrolyzes its bound ATP, resulting in the formation of a stable complex. GrpE releases ADP from DnaK; ATP binding to DnaK triggers the release of the substrate protein, thus completing the reaction cycle. Several rounds of ATP-dependent interactions between DnaJ, DnaK and GrpE are required for fully efficient folding. Also involved, together with DnaK and GrpE, in the DNA replication of plasmids through activation of initiation proteins.</text>
</comment>
<comment type="cofactor">
    <cofactor evidence="1">
        <name>Zn(2+)</name>
        <dbReference type="ChEBI" id="CHEBI:29105"/>
    </cofactor>
    <text evidence="1">Binds 2 Zn(2+) ions per monomer.</text>
</comment>
<comment type="subunit">
    <text evidence="1">Homodimer.</text>
</comment>
<comment type="subcellular location">
    <subcellularLocation>
        <location evidence="1">Cytoplasm</location>
    </subcellularLocation>
</comment>
<comment type="domain">
    <text evidence="1">The J domain is necessary and sufficient to stimulate DnaK ATPase activity. Zinc center 1 plays an important role in the autonomous, DnaK-independent chaperone activity of DnaJ. Zinc center 2 is essential for interaction with DnaK and for DnaJ activity.</text>
</comment>
<comment type="similarity">
    <text evidence="1">Belongs to the DnaJ family.</text>
</comment>
<organism>
    <name type="scientific">Thermotoga maritima (strain ATCC 43589 / DSM 3109 / JCM 10099 / NBRC 100826 / MSB8)</name>
    <dbReference type="NCBI Taxonomy" id="243274"/>
    <lineage>
        <taxon>Bacteria</taxon>
        <taxon>Thermotogati</taxon>
        <taxon>Thermotogota</taxon>
        <taxon>Thermotogae</taxon>
        <taxon>Thermotogales</taxon>
        <taxon>Thermotogaceae</taxon>
        <taxon>Thermotoga</taxon>
    </lineage>
</organism>